<protein>
    <recommendedName>
        <fullName>Chloromuconate cycloisomerase</fullName>
        <ecNumber>5.5.1.7</ecNumber>
    </recommendedName>
    <alternativeName>
        <fullName>Muconate cycloisomerase II</fullName>
    </alternativeName>
</protein>
<name>TCBD_PSESQ</name>
<gene>
    <name type="primary">tcbD</name>
</gene>
<organism>
    <name type="scientific">Pseudomonas sp. (strain P51)</name>
    <dbReference type="NCBI Taxonomy" id="65067"/>
    <lineage>
        <taxon>Bacteria</taxon>
        <taxon>Pseudomonadati</taxon>
        <taxon>Pseudomonadota</taxon>
        <taxon>Gammaproteobacteria</taxon>
        <taxon>Pseudomonadales</taxon>
        <taxon>Pseudomonadaceae</taxon>
        <taxon>Pseudomonas</taxon>
    </lineage>
</organism>
<comment type="catalytic activity">
    <reaction>
        <text>2-[(2R)-2-chloro-2,5-dihydro-5-oxofuryl]acetate = 3-chloro-cis,cis-muconate + H(+)</text>
        <dbReference type="Rhea" id="RHEA:11032"/>
        <dbReference type="ChEBI" id="CHEBI:15378"/>
        <dbReference type="ChEBI" id="CHEBI:17589"/>
        <dbReference type="ChEBI" id="CHEBI:85538"/>
        <dbReference type="EC" id="5.5.1.7"/>
    </reaction>
</comment>
<comment type="cofactor">
    <cofactor evidence="1">
        <name>Mn(2+)</name>
        <dbReference type="ChEBI" id="CHEBI:29035"/>
    </cofactor>
</comment>
<comment type="pathway">
    <text>Aromatic compound metabolism; 3-chlorocatechol degradation.</text>
</comment>
<comment type="miscellaneous">
    <text>Chloromuconate cycloisomerase II is highly active toward chlorinated substrates but retains diminished activity toward the non-chlorinated substrates.</text>
</comment>
<comment type="similarity">
    <text evidence="2">Belongs to the mandelate racemase/muconate lactonizing enzyme family.</text>
</comment>
<reference key="1">
    <citation type="journal article" date="1991" name="J. Bacteriol.">
        <title>Sequence analysis of the Pseudomonas sp. strain P51 tcb gene cluster, which encodes metabolism of chlorinated catechols: evidence for specialization of catechol 1,2-dioxygenases for chlorinated substrates.</title>
        <authorList>
            <person name="van der Meer J.R."/>
            <person name="Eggen R.I."/>
            <person name="Zehnder A.J."/>
            <person name="de Vos W.M."/>
        </authorList>
    </citation>
    <scope>NUCLEOTIDE SEQUENCE [GENOMIC DNA]</scope>
</reference>
<reference key="2">
    <citation type="journal article" date="2003" name="Protein Sci.">
        <title>The structure of Pseudomonas P51 Cl-muconate lactonizing enzyme: co-evolution of structure and dynamics with the dehalogenation function.</title>
        <authorList>
            <person name="Kajander T."/>
            <person name="Lehtioe L."/>
            <person name="Schloemann M."/>
            <person name="Goldman A."/>
        </authorList>
    </citation>
    <scope>X-RAY CRYSTALLOGRAPHY (1.95 ANGSTROMS)</scope>
    <scope>COFACTOR</scope>
</reference>
<sequence>MKIEAISTTIVDVPTRRPLQMSFTTVHKQSYVIVQVKAGGLVGIGEGGSVGGPTWGSESAETIKVIIDNYLAPLLVGKDASNLSQARVLMDRAVTGNLSAKAAIDIALHDLKARALNLSIADLIGGTMRTSIPIAWTLASGDTARDIDSALEMIETRRHNRFKVKLGARTPAQDLEHIRSIVKAVGDRASVRVDVNQGWDEQTASIWIPRLEEAGVELVEQPVPRANFGALRRLTEQNGVAILADESLSSLSSAFELARDHAVDAFSLKLCNMGGIANTLKVAAVAEAAGISSYGGTMLDSTVGTAAALHVYATLPSLPYGCELIGPWVLGDRLTQQDLEIKDFEVHLPLGSGLGVDLDHDKVRHYTRAA</sequence>
<dbReference type="EC" id="5.5.1.7"/>
<dbReference type="EMBL" id="M57629">
    <property type="protein sequence ID" value="AAD13626.1"/>
    <property type="molecule type" value="Genomic_DNA"/>
</dbReference>
<dbReference type="PIR" id="B43673">
    <property type="entry name" value="B43673"/>
</dbReference>
<dbReference type="PDB" id="1NU5">
    <property type="method" value="X-ray"/>
    <property type="resolution" value="1.95 A"/>
    <property type="chains" value="A=1-370"/>
</dbReference>
<dbReference type="PDBsum" id="1NU5"/>
<dbReference type="SMR" id="P27099"/>
<dbReference type="KEGG" id="ag:AAD13626"/>
<dbReference type="BioCyc" id="MetaCyc:MONOMER-14405"/>
<dbReference type="UniPathway" id="UPA00083"/>
<dbReference type="EvolutionaryTrace" id="P27099"/>
<dbReference type="GO" id="GO:0018850">
    <property type="term" value="F:chloromuconate cycloisomerase activity"/>
    <property type="evidence" value="ECO:0000303"/>
    <property type="project" value="UniProtKB"/>
</dbReference>
<dbReference type="GO" id="GO:0030145">
    <property type="term" value="F:manganese ion binding"/>
    <property type="evidence" value="ECO:0007669"/>
    <property type="project" value="InterPro"/>
</dbReference>
<dbReference type="GO" id="GO:0018849">
    <property type="term" value="F:muconate cycloisomerase activity"/>
    <property type="evidence" value="ECO:0007669"/>
    <property type="project" value="InterPro"/>
</dbReference>
<dbReference type="GO" id="GO:0046300">
    <property type="term" value="P:2,4-dichlorophenoxyacetic acid catabolic process"/>
    <property type="evidence" value="ECO:0000303"/>
    <property type="project" value="UniProtKB"/>
</dbReference>
<dbReference type="GO" id="GO:0009063">
    <property type="term" value="P:amino acid catabolic process"/>
    <property type="evidence" value="ECO:0007669"/>
    <property type="project" value="InterPro"/>
</dbReference>
<dbReference type="CDD" id="cd03318">
    <property type="entry name" value="MLE"/>
    <property type="match status" value="1"/>
</dbReference>
<dbReference type="Gene3D" id="3.20.20.120">
    <property type="entry name" value="Enolase-like C-terminal domain"/>
    <property type="match status" value="1"/>
</dbReference>
<dbReference type="Gene3D" id="3.30.390.10">
    <property type="entry name" value="Enolase-like, N-terminal domain"/>
    <property type="match status" value="1"/>
</dbReference>
<dbReference type="InterPro" id="IPR013370">
    <property type="entry name" value="Chloromuconate_cycloisomerase"/>
</dbReference>
<dbReference type="InterPro" id="IPR036849">
    <property type="entry name" value="Enolase-like_C_sf"/>
</dbReference>
<dbReference type="InterPro" id="IPR029017">
    <property type="entry name" value="Enolase-like_N"/>
</dbReference>
<dbReference type="InterPro" id="IPR029065">
    <property type="entry name" value="Enolase_C-like"/>
</dbReference>
<dbReference type="InterPro" id="IPR018110">
    <property type="entry name" value="Mandel_Rmase/mucon_lact_enz_CS"/>
</dbReference>
<dbReference type="InterPro" id="IPR013342">
    <property type="entry name" value="Mandelate_racemase_C"/>
</dbReference>
<dbReference type="InterPro" id="IPR013341">
    <property type="entry name" value="Mandelate_racemase_N_dom"/>
</dbReference>
<dbReference type="NCBIfam" id="TIGR02534">
    <property type="entry name" value="mucon_cyclo"/>
    <property type="match status" value="1"/>
</dbReference>
<dbReference type="PANTHER" id="PTHR48073:SF2">
    <property type="entry name" value="O-SUCCINYLBENZOATE SYNTHASE"/>
    <property type="match status" value="1"/>
</dbReference>
<dbReference type="PANTHER" id="PTHR48073">
    <property type="entry name" value="O-SUCCINYLBENZOATE SYNTHASE-RELATED"/>
    <property type="match status" value="1"/>
</dbReference>
<dbReference type="Pfam" id="PF13378">
    <property type="entry name" value="MR_MLE_C"/>
    <property type="match status" value="1"/>
</dbReference>
<dbReference type="Pfam" id="PF02746">
    <property type="entry name" value="MR_MLE_N"/>
    <property type="match status" value="1"/>
</dbReference>
<dbReference type="SFLD" id="SFLDG01258">
    <property type="entry name" value="(chloro)muconate_cycloisomeras"/>
    <property type="match status" value="1"/>
</dbReference>
<dbReference type="SFLD" id="SFLDG00180">
    <property type="entry name" value="muconate_cycloisomerase"/>
    <property type="match status" value="1"/>
</dbReference>
<dbReference type="SMART" id="SM00922">
    <property type="entry name" value="MR_MLE"/>
    <property type="match status" value="1"/>
</dbReference>
<dbReference type="SUPFAM" id="SSF51604">
    <property type="entry name" value="Enolase C-terminal domain-like"/>
    <property type="match status" value="1"/>
</dbReference>
<dbReference type="SUPFAM" id="SSF54826">
    <property type="entry name" value="Enolase N-terminal domain-like"/>
    <property type="match status" value="1"/>
</dbReference>
<dbReference type="PROSITE" id="PS00908">
    <property type="entry name" value="MR_MLE_1"/>
    <property type="match status" value="1"/>
</dbReference>
<dbReference type="PROSITE" id="PS00909">
    <property type="entry name" value="MR_MLE_2"/>
    <property type="match status" value="1"/>
</dbReference>
<proteinExistence type="evidence at protein level"/>
<evidence type="ECO:0000269" key="1">
    <source>
    </source>
</evidence>
<evidence type="ECO:0000305" key="2"/>
<evidence type="ECO:0007829" key="3">
    <source>
        <dbReference type="PDB" id="1NU5"/>
    </source>
</evidence>
<keyword id="KW-0002">3D-structure</keyword>
<keyword id="KW-0058">Aromatic hydrocarbons catabolism</keyword>
<keyword id="KW-0413">Isomerase</keyword>
<keyword id="KW-0464">Manganese</keyword>
<keyword id="KW-0479">Metal-binding</keyword>
<keyword id="KW-0614">Plasmid</keyword>
<feature type="chain" id="PRO_0000171254" description="Chloromuconate cycloisomerase">
    <location>
        <begin position="1"/>
        <end position="370"/>
    </location>
</feature>
<feature type="active site" description="Proton acceptor">
    <location>
        <position position="165"/>
    </location>
</feature>
<feature type="active site" description="Proton donor">
    <location>
        <position position="323"/>
    </location>
</feature>
<feature type="binding site">
    <location>
        <position position="194"/>
    </location>
    <ligand>
        <name>Mn(2+)</name>
        <dbReference type="ChEBI" id="CHEBI:29035"/>
    </ligand>
</feature>
<feature type="binding site">
    <location>
        <position position="220"/>
    </location>
    <ligand>
        <name>Mn(2+)</name>
        <dbReference type="ChEBI" id="CHEBI:29035"/>
    </ligand>
</feature>
<feature type="binding site">
    <location>
        <position position="245"/>
    </location>
    <ligand>
        <name>Mn(2+)</name>
        <dbReference type="ChEBI" id="CHEBI:29035"/>
    </ligand>
</feature>
<feature type="strand" evidence="3">
    <location>
        <begin position="2"/>
        <end position="21"/>
    </location>
</feature>
<feature type="strand" evidence="3">
    <location>
        <begin position="24"/>
        <end position="38"/>
    </location>
</feature>
<feature type="strand" evidence="3">
    <location>
        <begin position="41"/>
        <end position="47"/>
    </location>
</feature>
<feature type="turn" evidence="3">
    <location>
        <begin position="51"/>
        <end position="55"/>
    </location>
</feature>
<feature type="helix" evidence="3">
    <location>
        <begin position="60"/>
        <end position="69"/>
    </location>
</feature>
<feature type="helix" evidence="3">
    <location>
        <begin position="71"/>
        <end position="75"/>
    </location>
</feature>
<feature type="helix" evidence="3">
    <location>
        <begin position="83"/>
        <end position="93"/>
    </location>
</feature>
<feature type="helix" evidence="3">
    <location>
        <begin position="98"/>
        <end position="115"/>
    </location>
</feature>
<feature type="helix" evidence="3">
    <location>
        <begin position="120"/>
        <end position="124"/>
    </location>
</feature>
<feature type="strand" evidence="3">
    <location>
        <begin position="130"/>
        <end position="134"/>
    </location>
</feature>
<feature type="strand" evidence="3">
    <location>
        <begin position="136"/>
        <end position="138"/>
    </location>
</feature>
<feature type="helix" evidence="3">
    <location>
        <begin position="143"/>
        <end position="155"/>
    </location>
</feature>
<feature type="strand" evidence="3">
    <location>
        <begin position="160"/>
        <end position="165"/>
    </location>
</feature>
<feature type="strand" evidence="3">
    <location>
        <begin position="167"/>
        <end position="169"/>
    </location>
</feature>
<feature type="helix" evidence="3">
    <location>
        <begin position="171"/>
        <end position="185"/>
    </location>
</feature>
<feature type="helix" evidence="3">
    <location>
        <begin position="186"/>
        <end position="188"/>
    </location>
</feature>
<feature type="strand" evidence="3">
    <location>
        <begin position="190"/>
        <end position="194"/>
    </location>
</feature>
<feature type="helix" evidence="3">
    <location>
        <begin position="201"/>
        <end position="214"/>
    </location>
</feature>
<feature type="strand" evidence="3">
    <location>
        <begin position="218"/>
        <end position="220"/>
    </location>
</feature>
<feature type="helix" evidence="3">
    <location>
        <begin position="228"/>
        <end position="237"/>
    </location>
</feature>
<feature type="strand" evidence="3">
    <location>
        <begin position="239"/>
        <end position="245"/>
    </location>
</feature>
<feature type="helix" evidence="3">
    <location>
        <begin position="251"/>
        <end position="259"/>
    </location>
</feature>
<feature type="strand" evidence="3">
    <location>
        <begin position="264"/>
        <end position="268"/>
    </location>
</feature>
<feature type="helix" evidence="3">
    <location>
        <begin position="270"/>
        <end position="273"/>
    </location>
</feature>
<feature type="helix" evidence="3">
    <location>
        <begin position="276"/>
        <end position="289"/>
    </location>
</feature>
<feature type="strand" evidence="3">
    <location>
        <begin position="292"/>
        <end position="295"/>
    </location>
</feature>
<feature type="helix" evidence="3">
    <location>
        <begin position="302"/>
        <end position="312"/>
    </location>
</feature>
<feature type="helix" evidence="3">
    <location>
        <begin position="326"/>
        <end position="329"/>
    </location>
</feature>
<feature type="strand" evidence="3">
    <location>
        <begin position="330"/>
        <end position="332"/>
    </location>
</feature>
<feature type="strand" evidence="3">
    <location>
        <begin position="334"/>
        <end position="337"/>
    </location>
</feature>
<feature type="strand" evidence="3">
    <location>
        <begin position="345"/>
        <end position="347"/>
    </location>
</feature>
<feature type="strand" evidence="3">
    <location>
        <begin position="351"/>
        <end position="353"/>
    </location>
</feature>
<feature type="helix" evidence="3">
    <location>
        <begin position="360"/>
        <end position="366"/>
    </location>
</feature>
<accession>P27099</accession>
<geneLocation type="plasmid">
    <name>pP51</name>
</geneLocation>